<accession>P0CW94</accession>
<accession>C5PGS8</accession>
<accession>Q00415</accession>
<accession>Q02288</accession>
<accession>Q400Q0</accession>
<accession>Q400Q8</accession>
<accession>Q9C0M8</accession>
<keyword id="KW-0223">Dioxygenase</keyword>
<keyword id="KW-0408">Iron</keyword>
<keyword id="KW-0479">Metal-binding</keyword>
<keyword id="KW-0560">Oxidoreductase</keyword>
<keyword id="KW-0585">Phenylalanine catabolism</keyword>
<keyword id="KW-0677">Repeat</keyword>
<keyword id="KW-0828">Tyrosine catabolism</keyword>
<proteinExistence type="evidence at transcript level"/>
<feature type="chain" id="PRO_0000088403" description="4-hydroxyphenylpyruvate dioxygenase">
    <location>
        <begin position="1"/>
        <end position="399"/>
    </location>
</feature>
<feature type="domain" description="VOC 1" evidence="2">
    <location>
        <begin position="23"/>
        <end position="166"/>
    </location>
</feature>
<feature type="domain" description="VOC 2" evidence="2">
    <location>
        <begin position="197"/>
        <end position="355"/>
    </location>
</feature>
<feature type="binding site" evidence="1">
    <location>
        <position position="200"/>
    </location>
    <ligand>
        <name>Fe cation</name>
        <dbReference type="ChEBI" id="CHEBI:24875"/>
    </ligand>
</feature>
<feature type="binding site" evidence="1">
    <location>
        <position position="283"/>
    </location>
    <ligand>
        <name>Fe cation</name>
        <dbReference type="ChEBI" id="CHEBI:24875"/>
    </ligand>
</feature>
<feature type="binding site" evidence="1">
    <location>
        <position position="366"/>
    </location>
    <ligand>
        <name>Fe cation</name>
        <dbReference type="ChEBI" id="CHEBI:24875"/>
    </ligand>
</feature>
<feature type="sequence conflict" description="In Ref. 3; AAC60567." evidence="3" ref="3">
    <original>N</original>
    <variation>T</variation>
    <location>
        <position position="297"/>
    </location>
</feature>
<organism>
    <name type="scientific">Coccidioides posadasii (strain C735)</name>
    <name type="common">Valley fever fungus</name>
    <dbReference type="NCBI Taxonomy" id="222929"/>
    <lineage>
        <taxon>Eukaryota</taxon>
        <taxon>Fungi</taxon>
        <taxon>Dikarya</taxon>
        <taxon>Ascomycota</taxon>
        <taxon>Pezizomycotina</taxon>
        <taxon>Eurotiomycetes</taxon>
        <taxon>Eurotiomycetidae</taxon>
        <taxon>Onygenales</taxon>
        <taxon>Onygenaceae</taxon>
        <taxon>Coccidioides</taxon>
    </lineage>
</organism>
<protein>
    <recommendedName>
        <fullName>4-hydroxyphenylpyruvate dioxygenase</fullName>
        <shortName>4HPPD</shortName>
        <shortName>HPD</shortName>
        <shortName>HPPDase</shortName>
        <ecNumber>1.13.11.27</ecNumber>
    </recommendedName>
    <alternativeName>
        <fullName>T-cell reactive protein</fullName>
    </alternativeName>
</protein>
<comment type="catalytic activity">
    <reaction>
        <text>3-(4-hydroxyphenyl)pyruvate + O2 = homogentisate + CO2</text>
        <dbReference type="Rhea" id="RHEA:16189"/>
        <dbReference type="ChEBI" id="CHEBI:15379"/>
        <dbReference type="ChEBI" id="CHEBI:16169"/>
        <dbReference type="ChEBI" id="CHEBI:16526"/>
        <dbReference type="ChEBI" id="CHEBI:36242"/>
        <dbReference type="EC" id="1.13.11.27"/>
    </reaction>
</comment>
<comment type="cofactor">
    <cofactor evidence="1">
        <name>Fe cation</name>
        <dbReference type="ChEBI" id="CHEBI:24875"/>
    </cofactor>
    <text evidence="1">Binds 1 Fe cation per subunit.</text>
</comment>
<comment type="pathway">
    <text>Amino-acid degradation; L-phenylalanine degradation; acetoacetate and fumarate from L-phenylalanine: step 3/6.</text>
</comment>
<comment type="similarity">
    <text evidence="3">Belongs to the 4HPPD family.</text>
</comment>
<dbReference type="EC" id="1.13.11.27"/>
<dbReference type="EMBL" id="L38493">
    <property type="protein sequence ID" value="AAA82574.1"/>
    <property type="molecule type" value="Genomic_DNA"/>
</dbReference>
<dbReference type="EMBL" id="ACFW01000049">
    <property type="protein sequence ID" value="EER23731.1"/>
    <property type="molecule type" value="Genomic_DNA"/>
</dbReference>
<dbReference type="EMBL" id="S69110">
    <property type="protein sequence ID" value="AAC60567.3"/>
    <property type="molecule type" value="mRNA"/>
</dbReference>
<dbReference type="RefSeq" id="XP_003065876.1">
    <property type="nucleotide sequence ID" value="XM_003065830.1"/>
</dbReference>
<dbReference type="SMR" id="P0CW94"/>
<dbReference type="KEGG" id="cpw:9691346"/>
<dbReference type="VEuPathDB" id="FungiDB:CPC735_051010"/>
<dbReference type="HOGENOM" id="CLU_034004_3_1_1"/>
<dbReference type="OrthoDB" id="414569at2759"/>
<dbReference type="UniPathway" id="UPA00139">
    <property type="reaction ID" value="UER00362"/>
</dbReference>
<dbReference type="Proteomes" id="UP000009084">
    <property type="component" value="Unassembled WGS sequence"/>
</dbReference>
<dbReference type="GO" id="GO:0003868">
    <property type="term" value="F:4-hydroxyphenylpyruvate dioxygenase activity"/>
    <property type="evidence" value="ECO:0007669"/>
    <property type="project" value="UniProtKB-EC"/>
</dbReference>
<dbReference type="GO" id="GO:0046872">
    <property type="term" value="F:metal ion binding"/>
    <property type="evidence" value="ECO:0007669"/>
    <property type="project" value="UniProtKB-KW"/>
</dbReference>
<dbReference type="GO" id="GO:0006559">
    <property type="term" value="P:L-phenylalanine catabolic process"/>
    <property type="evidence" value="ECO:0007669"/>
    <property type="project" value="UniProtKB-UniPathway"/>
</dbReference>
<dbReference type="GO" id="GO:0006572">
    <property type="term" value="P:tyrosine catabolic process"/>
    <property type="evidence" value="ECO:0007669"/>
    <property type="project" value="UniProtKB-KW"/>
</dbReference>
<dbReference type="CDD" id="cd07250">
    <property type="entry name" value="HPPD_C_like"/>
    <property type="match status" value="1"/>
</dbReference>
<dbReference type="CDD" id="cd08342">
    <property type="entry name" value="HPPD_N_like"/>
    <property type="match status" value="1"/>
</dbReference>
<dbReference type="FunFam" id="3.10.180.10:FF:000001">
    <property type="entry name" value="4-hydroxyphenylpyruvate dioxygenase"/>
    <property type="match status" value="1"/>
</dbReference>
<dbReference type="FunFam" id="3.10.180.10:FF:000020">
    <property type="entry name" value="4-hydroxyphenylpyruvate dioxygenase"/>
    <property type="match status" value="1"/>
</dbReference>
<dbReference type="Gene3D" id="3.10.180.10">
    <property type="entry name" value="2,3-Dihydroxybiphenyl 1,2-Dioxygenase, domain 1"/>
    <property type="match status" value="2"/>
</dbReference>
<dbReference type="InterPro" id="IPR005956">
    <property type="entry name" value="4OHPhenylPyrv_dOase"/>
</dbReference>
<dbReference type="InterPro" id="IPR041735">
    <property type="entry name" value="4OHPhenylPyrv_dOase_C"/>
</dbReference>
<dbReference type="InterPro" id="IPR041736">
    <property type="entry name" value="4OHPhenylPyrv_dOase_N"/>
</dbReference>
<dbReference type="InterPro" id="IPR029068">
    <property type="entry name" value="Glyas_Bleomycin-R_OHBP_Dase"/>
</dbReference>
<dbReference type="InterPro" id="IPR004360">
    <property type="entry name" value="Glyas_Fos-R_dOase_dom"/>
</dbReference>
<dbReference type="InterPro" id="IPR037523">
    <property type="entry name" value="VOC"/>
</dbReference>
<dbReference type="NCBIfam" id="TIGR01263">
    <property type="entry name" value="4HPPD"/>
    <property type="match status" value="1"/>
</dbReference>
<dbReference type="PANTHER" id="PTHR11959">
    <property type="entry name" value="4-HYDROXYPHENYLPYRUVATE DIOXYGENASE"/>
    <property type="match status" value="1"/>
</dbReference>
<dbReference type="PANTHER" id="PTHR11959:SF1">
    <property type="entry name" value="4-HYDROXYPHENYLPYRUVATE DIOXYGENASE"/>
    <property type="match status" value="1"/>
</dbReference>
<dbReference type="Pfam" id="PF00903">
    <property type="entry name" value="Glyoxalase"/>
    <property type="match status" value="1"/>
</dbReference>
<dbReference type="PIRSF" id="PIRSF009283">
    <property type="entry name" value="HPP_dOase"/>
    <property type="match status" value="1"/>
</dbReference>
<dbReference type="SUPFAM" id="SSF54593">
    <property type="entry name" value="Glyoxalase/Bleomycin resistance protein/Dihydroxybiphenyl dioxygenase"/>
    <property type="match status" value="1"/>
</dbReference>
<dbReference type="PROSITE" id="PS51819">
    <property type="entry name" value="VOC"/>
    <property type="match status" value="2"/>
</dbReference>
<reference key="1">
    <citation type="journal article" date="1995" name="Gene">
        <title>Cloning and expression of a gene encoding a T-cell reactive protein from Coccidioides immitis: homology to 4-hydroxyphenylpyruvate dioxygenase and the mammalian F antigen.</title>
        <authorList>
            <person name="Wyckoff E.E."/>
            <person name="Pishko E.J."/>
            <person name="Kirkland T.N."/>
            <person name="Cole G.T."/>
        </authorList>
    </citation>
    <scope>NUCLEOTIDE SEQUENCE [GENOMIC DNA]</scope>
    <source>
        <strain>C735</strain>
    </source>
</reference>
<reference key="2">
    <citation type="journal article" date="2009" name="Genome Res.">
        <title>Comparative genomic analyses of the human fungal pathogens Coccidioides and their relatives.</title>
        <authorList>
            <person name="Sharpton T.J."/>
            <person name="Stajich J.E."/>
            <person name="Rounsley S.D."/>
            <person name="Gardner M.J."/>
            <person name="Wortman J.R."/>
            <person name="Jordar V.S."/>
            <person name="Maiti R."/>
            <person name="Kodira C.D."/>
            <person name="Neafsey D.E."/>
            <person name="Zeng Q."/>
            <person name="Hung C.-Y."/>
            <person name="McMahan C."/>
            <person name="Muszewska A."/>
            <person name="Grynberg M."/>
            <person name="Mandel M.A."/>
            <person name="Kellner E.M."/>
            <person name="Barker B.M."/>
            <person name="Galgiani J.N."/>
            <person name="Orbach M.J."/>
            <person name="Kirkland T.N."/>
            <person name="Cole G.T."/>
            <person name="Henn M.R."/>
            <person name="Birren B.W."/>
            <person name="Taylor J.W."/>
        </authorList>
    </citation>
    <scope>NUCLEOTIDE SEQUENCE [LARGE SCALE GENOMIC DNA]</scope>
    <source>
        <strain>C735</strain>
    </source>
</reference>
<reference key="3">
    <citation type="journal article" date="1991" name="Infect. Immun.">
        <title>Coccidioides immitis fractions which are antigenic for immune T lymphocytes.</title>
        <authorList>
            <person name="Kirkland T.N."/>
            <person name="Zhu S."/>
            <person name="Kruse D."/>
            <person name="Hsu L."/>
            <person name="Seshan K.R."/>
            <person name="Cole G.T."/>
        </authorList>
    </citation>
    <scope>NUCLEOTIDE SEQUENCE [MRNA] OF 237-300</scope>
    <source>
        <strain>C634</strain>
        <strain>C735</strain>
    </source>
</reference>
<sequence>MAPAADSPTLQPAQPSDLNQYRGYDHVHWYVGNAKQAATYYVTRMGFERVAYRGLETGSKAVASHVVRNGNITFILTSPLRSVEQASRFPEDEALLKEIHAHLERHGDGVKDVAFEVDCVESVFSAAVRNGAEVVSDVRTVEDEDGQIKMATIRTYGETTHTLIERSGYRGGFMPGYRMESNADATSKFLPKVVLERIDHCVGNQDWDEMERVCDYYEKILGFHRFWSVDDKDICTEFSALKSIVMASPNDIVKMPINEPAKGKKQSQIEEYVDFYNGAGVQHIALRTNNIIDAITNLKARGTEFIKVPETYYEDMKIRLKRQGLVLDEDFETLKSLDILIDFDENGYLLQLFTKHLMDRPTVFIEIIQRNNFSGFGAGNFRALFEAIEREQALRGTLI</sequence>
<evidence type="ECO:0000250" key="1"/>
<evidence type="ECO:0000255" key="2">
    <source>
        <dbReference type="PROSITE-ProRule" id="PRU01163"/>
    </source>
</evidence>
<evidence type="ECO:0000305" key="3"/>
<gene>
    <name type="primary">TCRP</name>
    <name type="ORF">CPC735_051010</name>
</gene>
<name>HPPD_COCP7</name>